<evidence type="ECO:0000255" key="1"/>
<evidence type="ECO:0000269" key="2">
    <source>
    </source>
</evidence>
<evidence type="ECO:0000269" key="3">
    <source>
    </source>
</evidence>
<evidence type="ECO:0000303" key="4">
    <source>
    </source>
</evidence>
<evidence type="ECO:0000303" key="5">
    <source>
    </source>
</evidence>
<evidence type="ECO:0000305" key="6"/>
<evidence type="ECO:0000305" key="7">
    <source>
    </source>
</evidence>
<evidence type="ECO:0000305" key="8">
    <source>
    </source>
</evidence>
<dbReference type="EMBL" id="AM232690">
    <property type="protein sequence ID" value="CAJ81650.1"/>
    <property type="molecule type" value="mRNA"/>
</dbReference>
<dbReference type="ArachnoServer" id="AS000056">
    <property type="toxin name" value="M-zodatoxin-Lt5a"/>
</dbReference>
<dbReference type="GO" id="GO:0005576">
    <property type="term" value="C:extracellular region"/>
    <property type="evidence" value="ECO:0007669"/>
    <property type="project" value="UniProtKB-SubCell"/>
</dbReference>
<dbReference type="GO" id="GO:0090729">
    <property type="term" value="F:toxin activity"/>
    <property type="evidence" value="ECO:0007669"/>
    <property type="project" value="UniProtKB-KW"/>
</dbReference>
<dbReference type="GO" id="GO:0042742">
    <property type="term" value="P:defense response to bacterium"/>
    <property type="evidence" value="ECO:0007669"/>
    <property type="project" value="UniProtKB-KW"/>
</dbReference>
<dbReference type="GO" id="GO:0050832">
    <property type="term" value="P:defense response to fungus"/>
    <property type="evidence" value="ECO:0007669"/>
    <property type="project" value="UniProtKB-KW"/>
</dbReference>
<dbReference type="GO" id="GO:0031640">
    <property type="term" value="P:killing of cells of another organism"/>
    <property type="evidence" value="ECO:0007669"/>
    <property type="project" value="UniProtKB-KW"/>
</dbReference>
<dbReference type="InterPro" id="IPR018802">
    <property type="entry name" value="Latarcin_precursor"/>
</dbReference>
<dbReference type="Pfam" id="PF10279">
    <property type="entry name" value="Latarcin"/>
    <property type="match status" value="1"/>
</dbReference>
<accession>Q1ELU9</accession>
<keyword id="KW-0027">Amidation</keyword>
<keyword id="KW-0044">Antibiotic</keyword>
<keyword id="KW-0929">Antimicrobial</keyword>
<keyword id="KW-0204">Cytolysis</keyword>
<keyword id="KW-0903">Direct protein sequencing</keyword>
<keyword id="KW-0295">Fungicide</keyword>
<keyword id="KW-0354">Hemolysis</keyword>
<keyword id="KW-0964">Secreted</keyword>
<keyword id="KW-0732">Signal</keyword>
<keyword id="KW-0800">Toxin</keyword>
<name>LAT5_LACTA</name>
<reference key="1">
    <citation type="journal article" date="2006" name="J. Biol. Chem.">
        <title>Latarcins, antimicrobial and cytolytic peptides from the venom of the spider Lachesana tarabaevi (Zodariidae) that exemplify biomolecular diversity.</title>
        <authorList>
            <person name="Kozlov S.A."/>
            <person name="Vassilevski A.A."/>
            <person name="Feofanov A.V."/>
            <person name="Surovoy A.Y."/>
            <person name="Karpunin D.V."/>
            <person name="Grishin E.V."/>
        </authorList>
    </citation>
    <scope>NUCLEOTIDE SEQUENCE [MRNA]</scope>
    <scope>PROTEIN SEQUENCE OF 65-92</scope>
    <scope>SYNTHESIS OF 65-92</scope>
    <scope>AMIDATION AT LEU-92</scope>
    <scope>FUNCTION</scope>
    <scope>SUBCELLULAR LOCATION</scope>
    <scope>DOMAIN</scope>
    <scope>MASS SPECTROMETRY</scope>
    <source>
        <tissue>Venom</tissue>
        <tissue>Venom gland</tissue>
    </source>
</reference>
<reference key="2">
    <citation type="journal article" date="2016" name="Biochem. J.">
        <title>Lachesana tarabaevi, an expert in membrane-active toxins.</title>
        <authorList>
            <person name="Kuzmenkov A.I."/>
            <person name="Sachkova M.Y."/>
            <person name="Kovalchuk S.I."/>
            <person name="Grishin E.V."/>
            <person name="Vassilevski A.A."/>
        </authorList>
    </citation>
    <scope>SUBCELLULAR LOCATION</scope>
    <scope>PQM MOTIF</scope>
    <scope>MASS SPECTROMETRY</scope>
    <scope>AMIDATION AT LEU-92</scope>
    <source>
        <tissue>Venom</tissue>
    </source>
</reference>
<organism>
    <name type="scientific">Lachesana tarabaevi</name>
    <name type="common">Spider</name>
    <dbReference type="NCBI Taxonomy" id="379576"/>
    <lineage>
        <taxon>Eukaryota</taxon>
        <taxon>Metazoa</taxon>
        <taxon>Ecdysozoa</taxon>
        <taxon>Arthropoda</taxon>
        <taxon>Chelicerata</taxon>
        <taxon>Arachnida</taxon>
        <taxon>Araneae</taxon>
        <taxon>Araneomorphae</taxon>
        <taxon>Entelegynae</taxon>
        <taxon>Entelegynae incertae sedis</taxon>
        <taxon>Zodariidae</taxon>
        <taxon>Lachesana</taxon>
    </lineage>
</organism>
<comment type="function">
    <text evidence="2">Has antimicrobial activity against. Gram-positive bacteria (A.globiformis VKM Ac-1112 (MIC=1.1 uM), and B.subtilis VKM B-501 (MIC=0.6 uM)), Gram-negative bacteria (E.coli DH5-alpha (MIC=0.6 uM), E.coli MH1 (MIC=0.6 uM), and P.aeruginosa PAO1 (MIC=18 uM)), and yeasts (P.pastoris GS115 (MIC&gt;37 uM), and S.cerevisiae Y190 (MIC&gt;37 uM)). Also has a moderate hemolytic activity against rabbit erythrocytes. Causes paralysis, but is not lethal when injected into insect (M.domestica) larvae.</text>
</comment>
<comment type="subcellular location">
    <subcellularLocation>
        <location evidence="2 3">Secreted</location>
    </subcellularLocation>
</comment>
<comment type="tissue specificity">
    <text evidence="7 8">Expressed by the venom gland.</text>
</comment>
<comment type="domain">
    <text evidence="4">The mature peptide (65-92) probably forms alpha-helices which disrupt target cell membranes.</text>
</comment>
<comment type="PTM">
    <text evidence="5">Cleavage of the propeptide depends on the processing quadruplet motif (XXXR, with at least one of X being E).</text>
</comment>
<comment type="mass spectrometry"/>
<comment type="mass spectrometry"/>
<comment type="similarity">
    <text evidence="6">Belongs to the cationic peptide 03 (latarcin) family. 05 subfamily.</text>
</comment>
<sequence>MKYCVVILALLVALVCITESRSTETGYAVAETLEDNDLDELQAYLEEIAEASEMEDFSNIEEARGFFGKMKEYFKKFGASFKRRFANLKKRLG</sequence>
<feature type="signal peptide" evidence="1">
    <location>
        <begin position="1"/>
        <end position="22"/>
    </location>
</feature>
<feature type="propeptide" id="PRO_0000249748" evidence="2">
    <location>
        <begin position="23"/>
        <end position="64"/>
    </location>
</feature>
<feature type="peptide" id="PRO_0000249749" description="M-zodatoxin-Lt5a">
    <location>
        <begin position="65"/>
        <end position="92"/>
    </location>
</feature>
<feature type="short sequence motif" description="Processing quadruplet motif" evidence="5">
    <location>
        <begin position="61"/>
        <end position="64"/>
    </location>
</feature>
<feature type="modified residue" description="Leucine amide" evidence="2 3">
    <location>
        <position position="92"/>
    </location>
</feature>
<proteinExistence type="evidence at protein level"/>
<protein>
    <recommendedName>
        <fullName evidence="6">M-zodatoxin-Lt5a</fullName>
        <shortName evidence="6">M-ZDTX-Lt5a</shortName>
    </recommendedName>
    <alternativeName>
        <fullName evidence="4">Latarcin-5</fullName>
        <shortName evidence="4">Ltc-5</shortName>
    </alternativeName>
</protein>